<reference key="1">
    <citation type="journal article" date="1998" name="Science">
        <title>Genome sequence of the nematode C. elegans: a platform for investigating biology.</title>
        <authorList>
            <consortium name="The C. elegans sequencing consortium"/>
        </authorList>
    </citation>
    <scope>NUCLEOTIDE SEQUENCE [LARGE SCALE GENOMIC DNA]</scope>
    <source>
        <strain>Bristol N2</strain>
    </source>
</reference>
<proteinExistence type="inferred from homology"/>
<dbReference type="EMBL" id="FO081044">
    <property type="protein sequence ID" value="CCD68760.1"/>
    <property type="molecule type" value="Genomic_DNA"/>
</dbReference>
<dbReference type="PIR" id="T15996">
    <property type="entry name" value="T15996"/>
</dbReference>
<dbReference type="RefSeq" id="NP_495001.1">
    <property type="nucleotide sequence ID" value="NM_062600.6"/>
</dbReference>
<dbReference type="SMR" id="P52057"/>
<dbReference type="BioGRID" id="39251">
    <property type="interactions" value="5"/>
</dbReference>
<dbReference type="FunCoup" id="P52057">
    <property type="interactions" value="2135"/>
</dbReference>
<dbReference type="STRING" id="6239.F09E5.8.1"/>
<dbReference type="PaxDb" id="6239-F09E5.8"/>
<dbReference type="PeptideAtlas" id="P52057"/>
<dbReference type="EnsemblMetazoa" id="F09E5.8.1">
    <property type="protein sequence ID" value="F09E5.8.1"/>
    <property type="gene ID" value="WBGene00017286"/>
</dbReference>
<dbReference type="GeneID" id="173906"/>
<dbReference type="KEGG" id="cel:CELE_F09E5.8"/>
<dbReference type="UCSC" id="F09E5.8">
    <property type="organism name" value="c. elegans"/>
</dbReference>
<dbReference type="AGR" id="WB:WBGene00017286"/>
<dbReference type="CTD" id="173906"/>
<dbReference type="WormBase" id="F09E5.8">
    <property type="protein sequence ID" value="CE02615"/>
    <property type="gene ID" value="WBGene00017286"/>
</dbReference>
<dbReference type="eggNOG" id="KOG3157">
    <property type="taxonomic scope" value="Eukaryota"/>
</dbReference>
<dbReference type="GeneTree" id="ENSGT00390000004928"/>
<dbReference type="HOGENOM" id="CLU_059988_2_1_1"/>
<dbReference type="InParanoid" id="P52057"/>
<dbReference type="OMA" id="PLEWHMI"/>
<dbReference type="OrthoDB" id="10264196at2759"/>
<dbReference type="PhylomeDB" id="P52057"/>
<dbReference type="PRO" id="PR:P52057"/>
<dbReference type="Proteomes" id="UP000001940">
    <property type="component" value="Chromosome II"/>
</dbReference>
<dbReference type="Bgee" id="WBGene00017286">
    <property type="expression patterns" value="Expressed in germ line (C elegans) and 4 other cell types or tissues"/>
</dbReference>
<dbReference type="GO" id="GO:0005737">
    <property type="term" value="C:cytoplasm"/>
    <property type="evidence" value="ECO:0000318"/>
    <property type="project" value="GO_Central"/>
</dbReference>
<dbReference type="GO" id="GO:0030170">
    <property type="term" value="F:pyridoxal phosphate binding"/>
    <property type="evidence" value="ECO:0000318"/>
    <property type="project" value="GO_Central"/>
</dbReference>
<dbReference type="GO" id="GO:0042816">
    <property type="term" value="P:vitamin B6 metabolic process"/>
    <property type="evidence" value="ECO:0000318"/>
    <property type="project" value="GO_Central"/>
</dbReference>
<dbReference type="CDD" id="cd06822">
    <property type="entry name" value="PLPDE_III_YBL036c_euk"/>
    <property type="match status" value="1"/>
</dbReference>
<dbReference type="FunFam" id="3.20.20.10:FF:000042">
    <property type="entry name" value="Pyridoxal phosphate homeostasis protein"/>
    <property type="match status" value="1"/>
</dbReference>
<dbReference type="Gene3D" id="3.20.20.10">
    <property type="entry name" value="Alanine racemase"/>
    <property type="match status" value="1"/>
</dbReference>
<dbReference type="HAMAP" id="MF_02087">
    <property type="entry name" value="PLP_homeostasis"/>
    <property type="match status" value="1"/>
</dbReference>
<dbReference type="InterPro" id="IPR029066">
    <property type="entry name" value="PLP-binding_barrel"/>
</dbReference>
<dbReference type="InterPro" id="IPR011078">
    <property type="entry name" value="PyrdxlP_homeostasis"/>
</dbReference>
<dbReference type="NCBIfam" id="TIGR00044">
    <property type="entry name" value="YggS family pyridoxal phosphate-dependent enzyme"/>
    <property type="match status" value="1"/>
</dbReference>
<dbReference type="PANTHER" id="PTHR10146">
    <property type="entry name" value="PROLINE SYNTHETASE CO-TRANSCRIBED BACTERIAL HOMOLOG PROTEIN"/>
    <property type="match status" value="1"/>
</dbReference>
<dbReference type="PANTHER" id="PTHR10146:SF14">
    <property type="entry name" value="PYRIDOXAL PHOSPHATE HOMEOSTASIS PROTEIN"/>
    <property type="match status" value="1"/>
</dbReference>
<dbReference type="PIRSF" id="PIRSF004848">
    <property type="entry name" value="YBL036c_PLPDEIII"/>
    <property type="match status" value="1"/>
</dbReference>
<dbReference type="SUPFAM" id="SSF51419">
    <property type="entry name" value="PLP-binding barrel"/>
    <property type="match status" value="1"/>
</dbReference>
<dbReference type="PROSITE" id="PS01211">
    <property type="entry name" value="UPF0001"/>
    <property type="match status" value="1"/>
</dbReference>
<protein>
    <recommendedName>
        <fullName evidence="1">Pyridoxal phosphate homeostasis protein</fullName>
        <shortName evidence="1">PLP homeostasis protein</shortName>
    </recommendedName>
</protein>
<accession>P52057</accession>
<evidence type="ECO:0000255" key="1">
    <source>
        <dbReference type="HAMAP-Rule" id="MF_03225"/>
    </source>
</evidence>
<gene>
    <name type="ORF">F09E5.8</name>
</gene>
<comment type="function">
    <text evidence="1">Pyridoxal 5'-phosphate (PLP)-binding protein, which may be involved in intracellular homeostatic regulation of pyridoxal 5'-phosphate (PLP), the active form of vitamin B6.</text>
</comment>
<comment type="similarity">
    <text evidence="1">Belongs to the pyridoxal phosphate-binding protein YggS/PROSC family.</text>
</comment>
<organism>
    <name type="scientific">Caenorhabditis elegans</name>
    <dbReference type="NCBI Taxonomy" id="6239"/>
    <lineage>
        <taxon>Eukaryota</taxon>
        <taxon>Metazoa</taxon>
        <taxon>Ecdysozoa</taxon>
        <taxon>Nematoda</taxon>
        <taxon>Chromadorea</taxon>
        <taxon>Rhabditida</taxon>
        <taxon>Rhabditina</taxon>
        <taxon>Rhabditomorpha</taxon>
        <taxon>Rhabditoidea</taxon>
        <taxon>Rhabditidae</taxon>
        <taxon>Peloderinae</taxon>
        <taxon>Caenorhabditis</taxon>
    </lineage>
</organism>
<name>PLPHP_CAEEL</name>
<keyword id="KW-0663">Pyridoxal phosphate</keyword>
<keyword id="KW-1185">Reference proteome</keyword>
<sequence length="244" mass="27196">MSIEIVQKSLFNIIEAVADAVTASQATKRCRLVAVSKTKSADLIEACYSQNQRHFGENYVQELEEKSDVLASKCLDIRWHFIGQVQSNKIGKICNSPGLWCVETVETEKHARIFDKEWSKHGANLSPLRVLVQVNTSGEDNKGGIEIGEAPKLAEFIRKECQNLKFDGFMTIGSFDNSHASGENPDFEKLFKVRQTWAEQTGESADSVELSMGMSDDFLQAIHQGATSVRVGSKLFGAREYKNK</sequence>
<feature type="chain" id="PRO_0000163212" description="Pyridoxal phosphate homeostasis protein">
    <location>
        <begin position="1"/>
        <end position="244"/>
    </location>
</feature>
<feature type="modified residue" description="N6-(pyridoxal phosphate)lysine" evidence="1">
    <location>
        <position position="37"/>
    </location>
</feature>